<evidence type="ECO:0000255" key="1">
    <source>
        <dbReference type="HAMAP-Rule" id="MF_00278"/>
    </source>
</evidence>
<comment type="function">
    <text evidence="1">IGPS catalyzes the conversion of PRFAR and glutamine to IGP, AICAR and glutamate. The HisH subunit catalyzes the hydrolysis of glutamine to glutamate and ammonia as part of the synthesis of IGP and AICAR. The resulting ammonia molecule is channeled to the active site of HisF.</text>
</comment>
<comment type="catalytic activity">
    <reaction evidence="1">
        <text>5-[(5-phospho-1-deoxy-D-ribulos-1-ylimino)methylamino]-1-(5-phospho-beta-D-ribosyl)imidazole-4-carboxamide + L-glutamine = D-erythro-1-(imidazol-4-yl)glycerol 3-phosphate + 5-amino-1-(5-phospho-beta-D-ribosyl)imidazole-4-carboxamide + L-glutamate + H(+)</text>
        <dbReference type="Rhea" id="RHEA:24793"/>
        <dbReference type="ChEBI" id="CHEBI:15378"/>
        <dbReference type="ChEBI" id="CHEBI:29985"/>
        <dbReference type="ChEBI" id="CHEBI:58278"/>
        <dbReference type="ChEBI" id="CHEBI:58359"/>
        <dbReference type="ChEBI" id="CHEBI:58475"/>
        <dbReference type="ChEBI" id="CHEBI:58525"/>
        <dbReference type="EC" id="4.3.2.10"/>
    </reaction>
</comment>
<comment type="catalytic activity">
    <reaction evidence="1">
        <text>L-glutamine + H2O = L-glutamate + NH4(+)</text>
        <dbReference type="Rhea" id="RHEA:15889"/>
        <dbReference type="ChEBI" id="CHEBI:15377"/>
        <dbReference type="ChEBI" id="CHEBI:28938"/>
        <dbReference type="ChEBI" id="CHEBI:29985"/>
        <dbReference type="ChEBI" id="CHEBI:58359"/>
        <dbReference type="EC" id="3.5.1.2"/>
    </reaction>
</comment>
<comment type="pathway">
    <text evidence="1">Amino-acid biosynthesis; L-histidine biosynthesis; L-histidine from 5-phospho-alpha-D-ribose 1-diphosphate: step 5/9.</text>
</comment>
<comment type="subunit">
    <text evidence="1">Heterodimer of HisH and HisF.</text>
</comment>
<comment type="subcellular location">
    <subcellularLocation>
        <location evidence="1">Cytoplasm</location>
    </subcellularLocation>
</comment>
<sequence length="205" mass="22167">MIALVDYGGGNLKSVANAIHALGYEFTLTSDPKEILSAQAVILPGVGAAADTVAGLRAKGLDEAIKELVKRDIPLLAICVGMQVLFDSTEEGGQTKCLGILAGEVKRLPDGVKIPQMGWNQLKQRVSHPLFEGIPDGTDFYFVHSYYASPADRNIIGATTDYGVDFCSLVINKRLIATQFHPEKSGSYGLKLYQNFFKMALGDKK</sequence>
<feature type="chain" id="PRO_0000231721" description="Imidazole glycerol phosphate synthase subunit HisH">
    <location>
        <begin position="1"/>
        <end position="205"/>
    </location>
</feature>
<feature type="domain" description="Glutamine amidotransferase type-1" evidence="1">
    <location>
        <begin position="1"/>
        <end position="205"/>
    </location>
</feature>
<feature type="active site" description="Nucleophile" evidence="1">
    <location>
        <position position="79"/>
    </location>
</feature>
<feature type="active site" evidence="1">
    <location>
        <position position="181"/>
    </location>
</feature>
<feature type="active site" evidence="1">
    <location>
        <position position="183"/>
    </location>
</feature>
<name>HIS5_DEHMC</name>
<keyword id="KW-0028">Amino-acid biosynthesis</keyword>
<keyword id="KW-0963">Cytoplasm</keyword>
<keyword id="KW-0315">Glutamine amidotransferase</keyword>
<keyword id="KW-0368">Histidine biosynthesis</keyword>
<keyword id="KW-0378">Hydrolase</keyword>
<keyword id="KW-0456">Lyase</keyword>
<gene>
    <name evidence="1" type="primary">hisH</name>
    <name type="ordered locus">cbdbA1060</name>
</gene>
<reference key="1">
    <citation type="journal article" date="2005" name="Nat. Biotechnol.">
        <title>Genome sequence of the chlorinated compound-respiring bacterium Dehalococcoides species strain CBDB1.</title>
        <authorList>
            <person name="Kube M."/>
            <person name="Beck A."/>
            <person name="Zinder S.H."/>
            <person name="Kuhl H."/>
            <person name="Reinhardt R."/>
            <person name="Adrian L."/>
        </authorList>
    </citation>
    <scope>NUCLEOTIDE SEQUENCE [LARGE SCALE GENOMIC DNA]</scope>
    <source>
        <strain>CBDB1</strain>
    </source>
</reference>
<dbReference type="EC" id="4.3.2.10" evidence="1"/>
<dbReference type="EC" id="3.5.1.2" evidence="1"/>
<dbReference type="EMBL" id="AJ965256">
    <property type="protein sequence ID" value="CAI83164.1"/>
    <property type="molecule type" value="Genomic_DNA"/>
</dbReference>
<dbReference type="RefSeq" id="WP_011309515.1">
    <property type="nucleotide sequence ID" value="NC_007356.1"/>
</dbReference>
<dbReference type="SMR" id="Q3ZY50"/>
<dbReference type="KEGG" id="deh:cbdbA1060"/>
<dbReference type="HOGENOM" id="CLU_071837_2_2_0"/>
<dbReference type="UniPathway" id="UPA00031">
    <property type="reaction ID" value="UER00010"/>
</dbReference>
<dbReference type="Proteomes" id="UP000000433">
    <property type="component" value="Chromosome"/>
</dbReference>
<dbReference type="GO" id="GO:0005737">
    <property type="term" value="C:cytoplasm"/>
    <property type="evidence" value="ECO:0007669"/>
    <property type="project" value="UniProtKB-SubCell"/>
</dbReference>
<dbReference type="GO" id="GO:0004359">
    <property type="term" value="F:glutaminase activity"/>
    <property type="evidence" value="ECO:0007669"/>
    <property type="project" value="UniProtKB-EC"/>
</dbReference>
<dbReference type="GO" id="GO:0000107">
    <property type="term" value="F:imidazoleglycerol-phosphate synthase activity"/>
    <property type="evidence" value="ECO:0007669"/>
    <property type="project" value="UniProtKB-UniRule"/>
</dbReference>
<dbReference type="GO" id="GO:0016829">
    <property type="term" value="F:lyase activity"/>
    <property type="evidence" value="ECO:0007669"/>
    <property type="project" value="UniProtKB-KW"/>
</dbReference>
<dbReference type="GO" id="GO:0000105">
    <property type="term" value="P:L-histidine biosynthetic process"/>
    <property type="evidence" value="ECO:0007669"/>
    <property type="project" value="UniProtKB-UniRule"/>
</dbReference>
<dbReference type="CDD" id="cd01748">
    <property type="entry name" value="GATase1_IGP_Synthase"/>
    <property type="match status" value="1"/>
</dbReference>
<dbReference type="Gene3D" id="3.40.50.880">
    <property type="match status" value="1"/>
</dbReference>
<dbReference type="HAMAP" id="MF_00278">
    <property type="entry name" value="HisH"/>
    <property type="match status" value="1"/>
</dbReference>
<dbReference type="InterPro" id="IPR029062">
    <property type="entry name" value="Class_I_gatase-like"/>
</dbReference>
<dbReference type="InterPro" id="IPR017926">
    <property type="entry name" value="GATASE"/>
</dbReference>
<dbReference type="InterPro" id="IPR010139">
    <property type="entry name" value="Imidazole-glycPsynth_HisH"/>
</dbReference>
<dbReference type="NCBIfam" id="TIGR01855">
    <property type="entry name" value="IMP_synth_hisH"/>
    <property type="match status" value="1"/>
</dbReference>
<dbReference type="PANTHER" id="PTHR42701">
    <property type="entry name" value="IMIDAZOLE GLYCEROL PHOSPHATE SYNTHASE SUBUNIT HISH"/>
    <property type="match status" value="1"/>
</dbReference>
<dbReference type="PANTHER" id="PTHR42701:SF1">
    <property type="entry name" value="IMIDAZOLE GLYCEROL PHOSPHATE SYNTHASE SUBUNIT HISH"/>
    <property type="match status" value="1"/>
</dbReference>
<dbReference type="Pfam" id="PF00117">
    <property type="entry name" value="GATase"/>
    <property type="match status" value="1"/>
</dbReference>
<dbReference type="PIRSF" id="PIRSF000495">
    <property type="entry name" value="Amidotransf_hisH"/>
    <property type="match status" value="1"/>
</dbReference>
<dbReference type="SUPFAM" id="SSF52317">
    <property type="entry name" value="Class I glutamine amidotransferase-like"/>
    <property type="match status" value="1"/>
</dbReference>
<dbReference type="PROSITE" id="PS51273">
    <property type="entry name" value="GATASE_TYPE_1"/>
    <property type="match status" value="1"/>
</dbReference>
<protein>
    <recommendedName>
        <fullName evidence="1">Imidazole glycerol phosphate synthase subunit HisH</fullName>
        <ecNumber evidence="1">4.3.2.10</ecNumber>
    </recommendedName>
    <alternativeName>
        <fullName evidence="1">IGP synthase glutaminase subunit</fullName>
        <ecNumber evidence="1">3.5.1.2</ecNumber>
    </alternativeName>
    <alternativeName>
        <fullName evidence="1">IGP synthase subunit HisH</fullName>
    </alternativeName>
    <alternativeName>
        <fullName evidence="1">ImGP synthase subunit HisH</fullName>
        <shortName evidence="1">IGPS subunit HisH</shortName>
    </alternativeName>
</protein>
<accession>Q3ZY50</accession>
<organism>
    <name type="scientific">Dehalococcoides mccartyi (strain CBDB1)</name>
    <dbReference type="NCBI Taxonomy" id="255470"/>
    <lineage>
        <taxon>Bacteria</taxon>
        <taxon>Bacillati</taxon>
        <taxon>Chloroflexota</taxon>
        <taxon>Dehalococcoidia</taxon>
        <taxon>Dehalococcoidales</taxon>
        <taxon>Dehalococcoidaceae</taxon>
        <taxon>Dehalococcoides</taxon>
    </lineage>
</organism>
<proteinExistence type="inferred from homology"/>